<name>ARB2A_DICDI</name>
<feature type="chain" id="PRO_0000336086" description="Cotranscriptional regulator ARB2A homolog">
    <location>
        <begin position="1"/>
        <end position="385"/>
    </location>
</feature>
<feature type="region of interest" description="Disordered" evidence="2">
    <location>
        <begin position="1"/>
        <end position="65"/>
    </location>
</feature>
<feature type="region of interest" description="Disordered" evidence="2">
    <location>
        <begin position="220"/>
        <end position="239"/>
    </location>
</feature>
<feature type="compositionally biased region" description="Low complexity" evidence="2">
    <location>
        <begin position="52"/>
        <end position="62"/>
    </location>
</feature>
<feature type="compositionally biased region" description="Basic and acidic residues" evidence="2">
    <location>
        <begin position="220"/>
        <end position="238"/>
    </location>
</feature>
<evidence type="ECO:0000250" key="1">
    <source>
        <dbReference type="UniProtKB" id="Q8WUF8"/>
    </source>
</evidence>
<evidence type="ECO:0000256" key="2">
    <source>
        <dbReference type="SAM" id="MobiDB-lite"/>
    </source>
</evidence>
<evidence type="ECO:0000305" key="3"/>
<sequence length="385" mass="43925">MSDIEKEENKDSSPPTTPPTGGPTKNNDIDDDEKENKIERSLTENLNKRFYNNNNNNSNNSNGEEIEDIDYKNFKTIKEFGYYYNDKGELRSIEGEEKFKFINQQQYDRLGDIIVKTIQNKMKSEPINLEEHWIPKGETNQCNIFTSKDFFENPTKLMVFINGSGAVKSGQWARSLCINDTLNTGSILPYLNDAISNDFSIIVLNPNYNVFEERIIEEGEEQKEKAKEEEEKKDDNGKLLKKKRVDNSIKGSENSNNHILTVYDEFIKKSPAKEIVIVAHSFGGVNTTYLLDNRGEEIADRLKSIAFTDSVHSLSPKSSSFTKSFFADENKTKNWVKSDKKLNTDLGFSKLQGCNIASSGHRVHEFTSSACRVPLFQFILNSLKK</sequence>
<keyword id="KW-1185">Reference proteome</keyword>
<gene>
    <name type="ORF">DDB_G0273237</name>
</gene>
<gene>
    <name type="ORF">DDB_G0273673</name>
</gene>
<organism>
    <name type="scientific">Dictyostelium discoideum</name>
    <name type="common">Social amoeba</name>
    <dbReference type="NCBI Taxonomy" id="44689"/>
    <lineage>
        <taxon>Eukaryota</taxon>
        <taxon>Amoebozoa</taxon>
        <taxon>Evosea</taxon>
        <taxon>Eumycetozoa</taxon>
        <taxon>Dictyostelia</taxon>
        <taxon>Dictyosteliales</taxon>
        <taxon>Dictyosteliaceae</taxon>
        <taxon>Dictyostelium</taxon>
    </lineage>
</organism>
<accession>Q557B6</accession>
<accession>Q86JR6</accession>
<comment type="similarity">
    <text evidence="3">Belongs to the ARB2A family.</text>
</comment>
<comment type="caution">
    <text evidence="3">The gene for this protein is duplicated in strains AX3 and AX4. These strains contain a duplication of a segment of 750 kb of chromosome 2 compared to the corresponding sequence in strain AX2.</text>
</comment>
<dbReference type="EMBL" id="AAFI02000011">
    <property type="protein sequence ID" value="EAL70527.1"/>
    <property type="molecule type" value="Genomic_DNA"/>
</dbReference>
<dbReference type="EMBL" id="AAFI02000009">
    <property type="protein sequence ID" value="EAL70836.1"/>
    <property type="molecule type" value="Genomic_DNA"/>
</dbReference>
<dbReference type="RefSeq" id="XP_644453.1">
    <property type="nucleotide sequence ID" value="XM_639361.1"/>
</dbReference>
<dbReference type="RefSeq" id="XP_644797.1">
    <property type="nucleotide sequence ID" value="XM_639705.1"/>
</dbReference>
<dbReference type="FunCoup" id="Q557B6">
    <property type="interactions" value="405"/>
</dbReference>
<dbReference type="ESTHER" id="dicdi-f172a">
    <property type="family name" value="Arb2_FAM172A"/>
</dbReference>
<dbReference type="PaxDb" id="44689-DDB0234078"/>
<dbReference type="EnsemblProtists" id="EAL70527">
    <property type="protein sequence ID" value="EAL70527"/>
    <property type="gene ID" value="DDB_G0273673"/>
</dbReference>
<dbReference type="EnsemblProtists" id="EAL70836">
    <property type="protein sequence ID" value="EAL70836"/>
    <property type="gene ID" value="DDB_G0273237"/>
</dbReference>
<dbReference type="GeneID" id="8618899"/>
<dbReference type="GeneID" id="8619078"/>
<dbReference type="KEGG" id="ddi:DDB_G0273237"/>
<dbReference type="KEGG" id="ddi:DDB_G0273673"/>
<dbReference type="dictyBase" id="DDB_G0273237"/>
<dbReference type="dictyBase" id="DDB_G0273673"/>
<dbReference type="VEuPathDB" id="AmoebaDB:DDB_G0273237"/>
<dbReference type="eggNOG" id="KOG3967">
    <property type="taxonomic scope" value="Eukaryota"/>
</dbReference>
<dbReference type="HOGENOM" id="CLU_048484_0_0_1"/>
<dbReference type="InParanoid" id="Q557B6"/>
<dbReference type="OMA" id="QWSQQAI"/>
<dbReference type="PhylomeDB" id="Q557B6"/>
<dbReference type="PRO" id="PR:Q557B6"/>
<dbReference type="Proteomes" id="UP000002195">
    <property type="component" value="Chromosome 2"/>
</dbReference>
<dbReference type="GO" id="GO:0005634">
    <property type="term" value="C:nucleus"/>
    <property type="evidence" value="ECO:0000318"/>
    <property type="project" value="GO_Central"/>
</dbReference>
<dbReference type="GO" id="GO:0031048">
    <property type="term" value="P:regulatory ncRNA-mediated heterochromatin formation"/>
    <property type="evidence" value="ECO:0000318"/>
    <property type="project" value="GO_Central"/>
</dbReference>
<dbReference type="FunFam" id="3.40.50.1820:FF:000894">
    <property type="entry name" value="FAM172 family protein homolog"/>
    <property type="match status" value="1"/>
</dbReference>
<dbReference type="Gene3D" id="3.40.50.1820">
    <property type="entry name" value="alpha/beta hydrolase"/>
    <property type="match status" value="1"/>
</dbReference>
<dbReference type="InterPro" id="IPR029058">
    <property type="entry name" value="AB_hydrolase_fold"/>
</dbReference>
<dbReference type="InterPro" id="IPR048263">
    <property type="entry name" value="Arb2"/>
</dbReference>
<dbReference type="InterPro" id="IPR053858">
    <property type="entry name" value="Arb2_dom"/>
</dbReference>
<dbReference type="PANTHER" id="PTHR21357">
    <property type="entry name" value="FAM172 FAMILY PROTEIN HOMOLOG CG10038"/>
    <property type="match status" value="1"/>
</dbReference>
<dbReference type="PANTHER" id="PTHR21357:SF4">
    <property type="entry name" value="FAM172 FAMILY PROTEIN HOMOLOG CG10038"/>
    <property type="match status" value="1"/>
</dbReference>
<dbReference type="Pfam" id="PF22749">
    <property type="entry name" value="Arb2"/>
    <property type="match status" value="1"/>
</dbReference>
<dbReference type="SUPFAM" id="SSF53474">
    <property type="entry name" value="alpha/beta-Hydrolases"/>
    <property type="match status" value="1"/>
</dbReference>
<reference key="1">
    <citation type="journal article" date="2002" name="Nature">
        <title>Sequence and analysis of chromosome 2 of Dictyostelium discoideum.</title>
        <authorList>
            <person name="Gloeckner G."/>
            <person name="Eichinger L."/>
            <person name="Szafranski K."/>
            <person name="Pachebat J.A."/>
            <person name="Bankier A.T."/>
            <person name="Dear P.H."/>
            <person name="Lehmann R."/>
            <person name="Baumgart C."/>
            <person name="Parra G."/>
            <person name="Abril J.F."/>
            <person name="Guigo R."/>
            <person name="Kumpf K."/>
            <person name="Tunggal B."/>
            <person name="Cox E.C."/>
            <person name="Quail M.A."/>
            <person name="Platzer M."/>
            <person name="Rosenthal A."/>
            <person name="Noegel A.A."/>
        </authorList>
    </citation>
    <scope>NUCLEOTIDE SEQUENCE [LARGE SCALE GENOMIC DNA]</scope>
    <source>
        <strain>AX4</strain>
    </source>
</reference>
<reference key="2">
    <citation type="journal article" date="2005" name="Nature">
        <title>The genome of the social amoeba Dictyostelium discoideum.</title>
        <authorList>
            <person name="Eichinger L."/>
            <person name="Pachebat J.A."/>
            <person name="Gloeckner G."/>
            <person name="Rajandream M.A."/>
            <person name="Sucgang R."/>
            <person name="Berriman M."/>
            <person name="Song J."/>
            <person name="Olsen R."/>
            <person name="Szafranski K."/>
            <person name="Xu Q."/>
            <person name="Tunggal B."/>
            <person name="Kummerfeld S."/>
            <person name="Madera M."/>
            <person name="Konfortov B.A."/>
            <person name="Rivero F."/>
            <person name="Bankier A.T."/>
            <person name="Lehmann R."/>
            <person name="Hamlin N."/>
            <person name="Davies R."/>
            <person name="Gaudet P."/>
            <person name="Fey P."/>
            <person name="Pilcher K."/>
            <person name="Chen G."/>
            <person name="Saunders D."/>
            <person name="Sodergren E.J."/>
            <person name="Davis P."/>
            <person name="Kerhornou A."/>
            <person name="Nie X."/>
            <person name="Hall N."/>
            <person name="Anjard C."/>
            <person name="Hemphill L."/>
            <person name="Bason N."/>
            <person name="Farbrother P."/>
            <person name="Desany B."/>
            <person name="Just E."/>
            <person name="Morio T."/>
            <person name="Rost R."/>
            <person name="Churcher C.M."/>
            <person name="Cooper J."/>
            <person name="Haydock S."/>
            <person name="van Driessche N."/>
            <person name="Cronin A."/>
            <person name="Goodhead I."/>
            <person name="Muzny D.M."/>
            <person name="Mourier T."/>
            <person name="Pain A."/>
            <person name="Lu M."/>
            <person name="Harper D."/>
            <person name="Lindsay R."/>
            <person name="Hauser H."/>
            <person name="James K.D."/>
            <person name="Quiles M."/>
            <person name="Madan Babu M."/>
            <person name="Saito T."/>
            <person name="Buchrieser C."/>
            <person name="Wardroper A."/>
            <person name="Felder M."/>
            <person name="Thangavelu M."/>
            <person name="Johnson D."/>
            <person name="Knights A."/>
            <person name="Loulseged H."/>
            <person name="Mungall K.L."/>
            <person name="Oliver K."/>
            <person name="Price C."/>
            <person name="Quail M.A."/>
            <person name="Urushihara H."/>
            <person name="Hernandez J."/>
            <person name="Rabbinowitsch E."/>
            <person name="Steffen D."/>
            <person name="Sanders M."/>
            <person name="Ma J."/>
            <person name="Kohara Y."/>
            <person name="Sharp S."/>
            <person name="Simmonds M.N."/>
            <person name="Spiegler S."/>
            <person name="Tivey A."/>
            <person name="Sugano S."/>
            <person name="White B."/>
            <person name="Walker D."/>
            <person name="Woodward J.R."/>
            <person name="Winckler T."/>
            <person name="Tanaka Y."/>
            <person name="Shaulsky G."/>
            <person name="Schleicher M."/>
            <person name="Weinstock G.M."/>
            <person name="Rosenthal A."/>
            <person name="Cox E.C."/>
            <person name="Chisholm R.L."/>
            <person name="Gibbs R.A."/>
            <person name="Loomis W.F."/>
            <person name="Platzer M."/>
            <person name="Kay R.R."/>
            <person name="Williams J.G."/>
            <person name="Dear P.H."/>
            <person name="Noegel A.A."/>
            <person name="Barrell B.G."/>
            <person name="Kuspa A."/>
        </authorList>
    </citation>
    <scope>NUCLEOTIDE SEQUENCE [LARGE SCALE GENOMIC DNA]</scope>
    <source>
        <strain>AX4</strain>
    </source>
</reference>
<protein>
    <recommendedName>
        <fullName evidence="1">Cotranscriptional regulator ARB2A homolog</fullName>
    </recommendedName>
    <alternativeName>
        <fullName>FAM172 family protein homolog</fullName>
    </alternativeName>
</protein>
<proteinExistence type="inferred from homology"/>